<protein>
    <recommendedName>
        <fullName>Latent membrane protein 1</fullName>
        <shortName>LMP-1</shortName>
    </recommendedName>
    <alternativeName>
        <fullName>Protein p63</fullName>
    </alternativeName>
</protein>
<accession>P13198</accession>
<sequence length="386" mass="42062">MDLDLERGPPGPRRPPRGPPLSSSIGLALLLLLLALLFWLYIIMSNWTGGALLVLYAFALMLVIIILIIFIFRRDLLCPLGALCLLLLMITLLLIALWNLHGQALYLGIVLFIFGCLLVLGLWIYLLEILWRLGATIWQLLAFFLAFFLDIILLIIALYLQQNWWTLLVDLLWLLLFLAILIWMYYHGQRHSDEHHHDDSLPHPQQATDDSSNQSDSNSNEGRHLLLVSGAGDGPPLCSQNLGAPGGGPNNGPQDPDNTDDNGPQDPDNTDDNGPHDPLPQDPDNTDDNGPQDPDNTDDNGPHDPLPHNPSDSAGNDGGPPQLTEEVENKGGDQGPPLMTDGGGGHSHDSGHDGIDPHLPTLLLGTSGSGGDDDDPHGPVQLSYYD</sequence>
<keyword id="KW-0002">3D-structure</keyword>
<keyword id="KW-1074">Activation of host NF-kappa-B by virus</keyword>
<keyword id="KW-1032">Host cell membrane</keyword>
<keyword id="KW-1043">Host membrane</keyword>
<keyword id="KW-0945">Host-virus interaction</keyword>
<keyword id="KW-1090">Inhibition of host innate immune response by virus</keyword>
<keyword id="KW-1114">Inhibition of host interferon signaling pathway by virus</keyword>
<keyword id="KW-1113">Inhibition of host RLR pathway by virus</keyword>
<keyword id="KW-1110">Inhibition of host TRAFs by virus</keyword>
<keyword id="KW-1112">Inhibition of host TYK2 by virus</keyword>
<keyword id="KW-0922">Interferon antiviral system evasion</keyword>
<keyword id="KW-0472">Membrane</keyword>
<keyword id="KW-0553">Oncogene</keyword>
<keyword id="KW-0597">Phosphoprotein</keyword>
<keyword id="KW-0812">Transmembrane</keyword>
<keyword id="KW-1133">Transmembrane helix</keyword>
<keyword id="KW-0832">Ubl conjugation</keyword>
<keyword id="KW-0899">Viral immunoevasion</keyword>
<comment type="function">
    <text evidence="2 5">Acts as a CD40 functional homolog to prevent apoptosis of infected B-lymphocytes and drive their proliferation (PubMed:16009714). Functions as a constitutively active tumor necrosis factor receptor that induces the activation of several signaling pathways, including those of the NF-kappa-B family. LMP1 signaling leads to up-regulation of antiapoptotic proteins and provide growth signals in latently infected cells. Interacts with host UBE2I and subsequently affects the sumoylation state of several cellular proteins. For example, induces the sumoylation of host IRF7 thereby limiting its transcriptional activity and modulating the activation of innate immune responses. Also inhibits host IFN-alpha-stimulated STAT2 nuclear translocation and interferon-stimulated response element transcriptional activity by interacting with and inhibiting host TYK2. Induces SUMO expression during viral latency thereby dysregulating the host sumoylation processes (By similarity).</text>
</comment>
<comment type="subunit">
    <text evidence="2 5">Interacts (via PXQXT motif) with host tumor necrosis factor receptor-associated factor (TRAF) proteins TRAF1, TRAF2, TRAF3 and TRAF5. Interacts with TRAF3; this interaction activates B lymphocytes (PubMed:16009714). Interacts with human protein ZMYND11; leading to negatively regulate NF-kappa-B activation. Interacts with host UBE2I; this interaction induces the sumoylation of various cellular proteins. Interacts with host IRF7. Interacts with host TYK2.</text>
</comment>
<comment type="subcellular location">
    <subcellularLocation>
        <location evidence="1">Host cell membrane</location>
        <topology evidence="1">Multi-pass membrane protein</topology>
    </subcellularLocation>
</comment>
<comment type="domain">
    <text evidence="1">Two regions, C-terminal-activating region 1 (CTAR1) and CTAR2, have been identified within the cytoplasmic carboxy terminal domain that activates NF-kappa-B.</text>
</comment>
<comment type="PTM">
    <text evidence="1">Ubiquitinated on the N-terminus.</text>
</comment>
<comment type="similarity">
    <text evidence="6">Belongs to the herpesviridae LMP-1 family.</text>
</comment>
<proteinExistence type="evidence at protein level"/>
<reference key="1">
    <citation type="journal article" date="1988" name="Virology">
        <title>Sequence analysis of Raji Epstein-Barr virus DNA.</title>
        <authorList>
            <person name="Hatfull G."/>
            <person name="Bankier A.T."/>
            <person name="Barrell B.G."/>
            <person name="Farrell P.J."/>
        </authorList>
    </citation>
    <scope>NUCLEOTIDE SEQUENCE [GENOMIC DNA]</scope>
</reference>
<reference evidence="7" key="2">
    <citation type="journal article" date="2005" name="J. Biol. Chem.">
        <title>LMP1 protein from the Epstein-Barr virus is a structural CD40 decoy in B lymphocytes for binding to TRAF3.</title>
        <authorList>
            <person name="Wu S."/>
            <person name="Xie P."/>
            <person name="Welsh K."/>
            <person name="Li C."/>
            <person name="Ni C.Z."/>
            <person name="Zhu X."/>
            <person name="Reed J.C."/>
            <person name="Satterthwait A.C."/>
            <person name="Bishop G.A."/>
            <person name="Ely K.R."/>
        </authorList>
    </citation>
    <scope>X-RAY CRYSTALLOGRAPHY (2.80 ANGSTROMS) OF 203-210</scope>
    <scope>FUNCTION</scope>
    <scope>INTERACTION WITH HOST TRAF3</scope>
</reference>
<feature type="initiator methionine" description="Removed" evidence="1">
    <location>
        <position position="1"/>
    </location>
</feature>
<feature type="chain" id="PRO_0000116181" description="Latent membrane protein 1">
    <location>
        <begin position="2"/>
        <end position="386"/>
    </location>
</feature>
<feature type="topological domain" description="Cytoplasmic" evidence="1">
    <location>
        <begin position="2"/>
        <end position="23"/>
    </location>
</feature>
<feature type="transmembrane region" description="Helical" evidence="3">
    <location>
        <begin position="24"/>
        <end position="44"/>
    </location>
</feature>
<feature type="topological domain" description="Extracellular" evidence="1">
    <location>
        <begin position="45"/>
        <end position="51"/>
    </location>
</feature>
<feature type="transmembrane region" description="Helical" evidence="3">
    <location>
        <begin position="52"/>
        <end position="72"/>
    </location>
</feature>
<feature type="topological domain" description="Cytoplasmic" evidence="1">
    <location>
        <begin position="73"/>
        <end position="75"/>
    </location>
</feature>
<feature type="transmembrane region" description="Helical" evidence="3">
    <location>
        <begin position="76"/>
        <end position="96"/>
    </location>
</feature>
<feature type="topological domain" description="Extracellular" evidence="1">
    <location>
        <begin position="97"/>
        <end position="106"/>
    </location>
</feature>
<feature type="transmembrane region" description="Helical" evidence="3">
    <location>
        <begin position="107"/>
        <end position="127"/>
    </location>
</feature>
<feature type="topological domain" description="Cytoplasmic" evidence="1">
    <location>
        <begin position="128"/>
        <end position="139"/>
    </location>
</feature>
<feature type="transmembrane region" description="Helical" evidence="3">
    <location>
        <begin position="140"/>
        <end position="160"/>
    </location>
</feature>
<feature type="topological domain" description="Extracellular" evidence="1">
    <location>
        <begin position="161"/>
        <end position="163"/>
    </location>
</feature>
<feature type="transmembrane region" description="Helical" evidence="3">
    <location>
        <begin position="164"/>
        <end position="184"/>
    </location>
</feature>
<feature type="topological domain" description="Cytoplasmic" evidence="1">
    <location>
        <begin position="185"/>
        <end position="386"/>
    </location>
</feature>
<feature type="region of interest" description="Disordered" evidence="4">
    <location>
        <begin position="194"/>
        <end position="386"/>
    </location>
</feature>
<feature type="region of interest" description="CTAR1" evidence="1">
    <location>
        <begin position="194"/>
        <end position="232"/>
    </location>
</feature>
<feature type="region of interest" description="CTAR2" evidence="1">
    <location>
        <begin position="342"/>
        <end position="386"/>
    </location>
</feature>
<feature type="compositionally biased region" description="Low complexity" evidence="4">
    <location>
        <begin position="209"/>
        <end position="220"/>
    </location>
</feature>
<feature type="compositionally biased region" description="Low complexity" evidence="4">
    <location>
        <begin position="251"/>
        <end position="267"/>
    </location>
</feature>
<feature type="compositionally biased region" description="Basic and acidic residues" evidence="4">
    <location>
        <begin position="346"/>
        <end position="356"/>
    </location>
</feature>
<feature type="compositionally biased region" description="Low complexity" evidence="4">
    <location>
        <begin position="357"/>
        <end position="366"/>
    </location>
</feature>
<feature type="site" description="Interaction with host TRAF3" evidence="5">
    <location>
        <position position="204"/>
    </location>
</feature>
<feature type="site" description="Interaction with host TRAF3" evidence="5">
    <location>
        <position position="206"/>
    </location>
</feature>
<feature type="site" description="Interaction with host TRAF3" evidence="5">
    <location>
        <position position="208"/>
    </location>
</feature>
<feature type="site" description="Interaction with host TRAF3" evidence="5">
    <location>
        <position position="210"/>
    </location>
</feature>
<dbReference type="EMBL" id="M20868">
    <property type="protein sequence ID" value="AAA66532.1"/>
    <property type="molecule type" value="Genomic_DNA"/>
</dbReference>
<dbReference type="PIR" id="C28918">
    <property type="entry name" value="LABERJ"/>
</dbReference>
<dbReference type="PDB" id="1ZMS">
    <property type="method" value="X-ray"/>
    <property type="resolution" value="2.80 A"/>
    <property type="chains" value="B=203-210"/>
</dbReference>
<dbReference type="PDBsum" id="1ZMS"/>
<dbReference type="SMR" id="P13198"/>
<dbReference type="EvolutionaryTrace" id="P13198"/>
<dbReference type="GO" id="GO:0020002">
    <property type="term" value="C:host cell plasma membrane"/>
    <property type="evidence" value="ECO:0007669"/>
    <property type="project" value="UniProtKB-SubCell"/>
</dbReference>
<dbReference type="GO" id="GO:0016020">
    <property type="term" value="C:membrane"/>
    <property type="evidence" value="ECO:0007669"/>
    <property type="project" value="UniProtKB-KW"/>
</dbReference>
<dbReference type="GO" id="GO:0085033">
    <property type="term" value="P:symbiont-mediated activation of host NF-kappaB cascade"/>
    <property type="evidence" value="ECO:0007669"/>
    <property type="project" value="UniProtKB-KW"/>
</dbReference>
<dbReference type="GO" id="GO:0039574">
    <property type="term" value="P:symbiont-mediated suppression of host JAK-STAT cascade via inhibition of host TYK2 activity"/>
    <property type="evidence" value="ECO:0007669"/>
    <property type="project" value="UniProtKB-KW"/>
</dbReference>
<dbReference type="GO" id="GO:0039527">
    <property type="term" value="P:symbiont-mediated suppression of host TRAF-mediated signal transduction"/>
    <property type="evidence" value="ECO:0007669"/>
    <property type="project" value="UniProtKB-KW"/>
</dbReference>
<dbReference type="GO" id="GO:0039502">
    <property type="term" value="P:symbiont-mediated suppression of host type I interferon-mediated signaling pathway"/>
    <property type="evidence" value="ECO:0007669"/>
    <property type="project" value="UniProtKB-KW"/>
</dbReference>
<dbReference type="GO" id="GO:0019087">
    <property type="term" value="P:symbiont-mediated transformation of host cell"/>
    <property type="evidence" value="ECO:0007669"/>
    <property type="project" value="InterPro"/>
</dbReference>
<dbReference type="InterPro" id="IPR007961">
    <property type="entry name" value="Herpes_LMP1"/>
</dbReference>
<dbReference type="Pfam" id="PF05297">
    <property type="entry name" value="Herpes_LMP1"/>
    <property type="match status" value="1"/>
</dbReference>
<organismHost>
    <name type="scientific">Homo sapiens</name>
    <name type="common">Human</name>
    <dbReference type="NCBI Taxonomy" id="9606"/>
</organismHost>
<organism>
    <name type="scientific">Epstein-Barr virus (strain Raji)</name>
    <name type="common">HHV-4</name>
    <name type="synonym">Human herpesvirus 4</name>
    <dbReference type="NCBI Taxonomy" id="10378"/>
    <lineage>
        <taxon>Viruses</taxon>
        <taxon>Duplodnaviria</taxon>
        <taxon>Heunggongvirae</taxon>
        <taxon>Peploviricota</taxon>
        <taxon>Herviviricetes</taxon>
        <taxon>Herpesvirales</taxon>
        <taxon>Orthoherpesviridae</taxon>
        <taxon>Gammaherpesvirinae</taxon>
        <taxon>Lymphocryptovirus</taxon>
        <taxon>Lymphocryptovirus humangamma4</taxon>
        <taxon>Epstein-Barr virus (strain GD1)</taxon>
    </lineage>
</organism>
<name>LMP1_EBVR</name>
<gene>
    <name type="primary">LMP1</name>
    <name type="ORF">BNLF1</name>
</gene>
<evidence type="ECO:0000250" key="1"/>
<evidence type="ECO:0000250" key="2">
    <source>
        <dbReference type="UniProtKB" id="P03230"/>
    </source>
</evidence>
<evidence type="ECO:0000255" key="3"/>
<evidence type="ECO:0000256" key="4">
    <source>
        <dbReference type="SAM" id="MobiDB-lite"/>
    </source>
</evidence>
<evidence type="ECO:0000269" key="5">
    <source>
    </source>
</evidence>
<evidence type="ECO:0000305" key="6"/>
<evidence type="ECO:0007744" key="7">
    <source>
        <dbReference type="PDB" id="1ZMS"/>
    </source>
</evidence>